<gene>
    <name evidence="1" type="primary">gpmI</name>
    <name type="ordered locus">PA14_67770</name>
</gene>
<organism>
    <name type="scientific">Pseudomonas aeruginosa (strain UCBPP-PA14)</name>
    <dbReference type="NCBI Taxonomy" id="208963"/>
    <lineage>
        <taxon>Bacteria</taxon>
        <taxon>Pseudomonadati</taxon>
        <taxon>Pseudomonadota</taxon>
        <taxon>Gammaproteobacteria</taxon>
        <taxon>Pseudomonadales</taxon>
        <taxon>Pseudomonadaceae</taxon>
        <taxon>Pseudomonas</taxon>
    </lineage>
</organism>
<accession>Q02EN5</accession>
<sequence>MTATPKPLVLIILDGFGHSESPDYNAIYAAKKPVWDRLLATQPHGLISGSGMDVGLPDGQMGNSEVGHMNLGAGRVVYQDFTRVTKAIRDGEFFENPVIAAAVDKAVAADKAVHILGLLSPGGVHSHEDHLVAMAQMAARRGAGKIYLHAFLDGRDTPPKSAQPSLERLDATFAGLGKGRIASIIGRYFAMDRDNRWDRVQAAYELIVDGKAEFTADSSVAALEAAYARGESDEFVKATAVVPAGAEAVRVEDGDAVIFMNFRADRARELSRAFVEPAFKEFPREQAPQLAGFVMLTQYAASIPAPCAFPPEPLTNVLGEYLAKHGKTQLRIAETEKYAHVTFFFSGGREEPYEGEERILIPSPKVATYDLQPEMSAPEVTDRIVEAIEQQRYDVIVVNYANGDMVGHTGVFEAAVKAVECLDTCMGRIVEALDKVGGEALITADHGNVEQMEDESTGQAHTAHTCEPVPFVYVGKRKLSIREGGVLADVAPTMLTLMGLEQPAEMTGRSIVTLG</sequence>
<proteinExistence type="inferred from homology"/>
<keyword id="KW-0324">Glycolysis</keyword>
<keyword id="KW-0413">Isomerase</keyword>
<keyword id="KW-0464">Manganese</keyword>
<keyword id="KW-0479">Metal-binding</keyword>
<reference key="1">
    <citation type="journal article" date="2006" name="Genome Biol.">
        <title>Genomic analysis reveals that Pseudomonas aeruginosa virulence is combinatorial.</title>
        <authorList>
            <person name="Lee D.G."/>
            <person name="Urbach J.M."/>
            <person name="Wu G."/>
            <person name="Liberati N.T."/>
            <person name="Feinbaum R.L."/>
            <person name="Miyata S."/>
            <person name="Diggins L.T."/>
            <person name="He J."/>
            <person name="Saucier M."/>
            <person name="Deziel E."/>
            <person name="Friedman L."/>
            <person name="Li L."/>
            <person name="Grills G."/>
            <person name="Montgomery K."/>
            <person name="Kucherlapati R."/>
            <person name="Rahme L.G."/>
            <person name="Ausubel F.M."/>
        </authorList>
    </citation>
    <scope>NUCLEOTIDE SEQUENCE [LARGE SCALE GENOMIC DNA]</scope>
    <source>
        <strain>UCBPP-PA14</strain>
    </source>
</reference>
<dbReference type="EC" id="5.4.2.12" evidence="1"/>
<dbReference type="EMBL" id="CP000438">
    <property type="protein sequence ID" value="ABJ14514.1"/>
    <property type="molecule type" value="Genomic_DNA"/>
</dbReference>
<dbReference type="RefSeq" id="WP_004365494.1">
    <property type="nucleotide sequence ID" value="NZ_CP034244.1"/>
</dbReference>
<dbReference type="SMR" id="Q02EN5"/>
<dbReference type="KEGG" id="pau:PA14_67770"/>
<dbReference type="PseudoCAP" id="PA14_67770"/>
<dbReference type="HOGENOM" id="CLU_026099_2_0_6"/>
<dbReference type="BioCyc" id="PAER208963:G1G74-5714-MONOMER"/>
<dbReference type="UniPathway" id="UPA00109">
    <property type="reaction ID" value="UER00186"/>
</dbReference>
<dbReference type="Proteomes" id="UP000000653">
    <property type="component" value="Chromosome"/>
</dbReference>
<dbReference type="GO" id="GO:0005829">
    <property type="term" value="C:cytosol"/>
    <property type="evidence" value="ECO:0007669"/>
    <property type="project" value="TreeGrafter"/>
</dbReference>
<dbReference type="GO" id="GO:0030145">
    <property type="term" value="F:manganese ion binding"/>
    <property type="evidence" value="ECO:0007669"/>
    <property type="project" value="UniProtKB-UniRule"/>
</dbReference>
<dbReference type="GO" id="GO:0004619">
    <property type="term" value="F:phosphoglycerate mutase activity"/>
    <property type="evidence" value="ECO:0007669"/>
    <property type="project" value="UniProtKB-EC"/>
</dbReference>
<dbReference type="GO" id="GO:0006007">
    <property type="term" value="P:glucose catabolic process"/>
    <property type="evidence" value="ECO:0007669"/>
    <property type="project" value="InterPro"/>
</dbReference>
<dbReference type="GO" id="GO:0006096">
    <property type="term" value="P:glycolytic process"/>
    <property type="evidence" value="ECO:0007669"/>
    <property type="project" value="UniProtKB-UniRule"/>
</dbReference>
<dbReference type="CDD" id="cd16010">
    <property type="entry name" value="iPGM"/>
    <property type="match status" value="1"/>
</dbReference>
<dbReference type="FunFam" id="3.40.1450.10:FF:000001">
    <property type="entry name" value="2,3-bisphosphoglycerate-independent phosphoglycerate mutase"/>
    <property type="match status" value="1"/>
</dbReference>
<dbReference type="FunFam" id="3.40.720.10:FF:000001">
    <property type="entry name" value="2,3-bisphosphoglycerate-independent phosphoglycerate mutase"/>
    <property type="match status" value="1"/>
</dbReference>
<dbReference type="Gene3D" id="3.40.720.10">
    <property type="entry name" value="Alkaline Phosphatase, subunit A"/>
    <property type="match status" value="1"/>
</dbReference>
<dbReference type="Gene3D" id="3.40.1450.10">
    <property type="entry name" value="BPG-independent phosphoglycerate mutase, domain B"/>
    <property type="match status" value="1"/>
</dbReference>
<dbReference type="HAMAP" id="MF_01038">
    <property type="entry name" value="GpmI"/>
    <property type="match status" value="1"/>
</dbReference>
<dbReference type="InterPro" id="IPR017850">
    <property type="entry name" value="Alkaline_phosphatase_core_sf"/>
</dbReference>
<dbReference type="InterPro" id="IPR011258">
    <property type="entry name" value="BPG-indep_PGM_N"/>
</dbReference>
<dbReference type="InterPro" id="IPR006124">
    <property type="entry name" value="Metalloenzyme"/>
</dbReference>
<dbReference type="InterPro" id="IPR036646">
    <property type="entry name" value="PGAM_B_sf"/>
</dbReference>
<dbReference type="InterPro" id="IPR005995">
    <property type="entry name" value="Pgm_bpd_ind"/>
</dbReference>
<dbReference type="NCBIfam" id="TIGR01307">
    <property type="entry name" value="pgm_bpd_ind"/>
    <property type="match status" value="1"/>
</dbReference>
<dbReference type="PANTHER" id="PTHR31637">
    <property type="entry name" value="2,3-BISPHOSPHOGLYCERATE-INDEPENDENT PHOSPHOGLYCERATE MUTASE"/>
    <property type="match status" value="1"/>
</dbReference>
<dbReference type="PANTHER" id="PTHR31637:SF0">
    <property type="entry name" value="2,3-BISPHOSPHOGLYCERATE-INDEPENDENT PHOSPHOGLYCERATE MUTASE"/>
    <property type="match status" value="1"/>
</dbReference>
<dbReference type="Pfam" id="PF06415">
    <property type="entry name" value="iPGM_N"/>
    <property type="match status" value="1"/>
</dbReference>
<dbReference type="Pfam" id="PF01676">
    <property type="entry name" value="Metalloenzyme"/>
    <property type="match status" value="1"/>
</dbReference>
<dbReference type="PIRSF" id="PIRSF001492">
    <property type="entry name" value="IPGAM"/>
    <property type="match status" value="1"/>
</dbReference>
<dbReference type="SUPFAM" id="SSF64158">
    <property type="entry name" value="2,3-Bisphosphoglycerate-independent phosphoglycerate mutase, substrate-binding domain"/>
    <property type="match status" value="1"/>
</dbReference>
<dbReference type="SUPFAM" id="SSF53649">
    <property type="entry name" value="Alkaline phosphatase-like"/>
    <property type="match status" value="1"/>
</dbReference>
<feature type="chain" id="PRO_1000063988" description="2,3-bisphosphoglycerate-independent phosphoglycerate mutase">
    <location>
        <begin position="1"/>
        <end position="515"/>
    </location>
</feature>
<feature type="active site" description="Phosphoserine intermediate" evidence="1">
    <location>
        <position position="64"/>
    </location>
</feature>
<feature type="binding site" evidence="1">
    <location>
        <position position="14"/>
    </location>
    <ligand>
        <name>Mn(2+)</name>
        <dbReference type="ChEBI" id="CHEBI:29035"/>
        <label>2</label>
    </ligand>
</feature>
<feature type="binding site" evidence="1">
    <location>
        <position position="64"/>
    </location>
    <ligand>
        <name>Mn(2+)</name>
        <dbReference type="ChEBI" id="CHEBI:29035"/>
        <label>2</label>
    </ligand>
</feature>
<feature type="binding site" evidence="1">
    <location>
        <position position="125"/>
    </location>
    <ligand>
        <name>substrate</name>
    </ligand>
</feature>
<feature type="binding site" evidence="1">
    <location>
        <begin position="155"/>
        <end position="156"/>
    </location>
    <ligand>
        <name>substrate</name>
    </ligand>
</feature>
<feature type="binding site" evidence="1">
    <location>
        <position position="187"/>
    </location>
    <ligand>
        <name>substrate</name>
    </ligand>
</feature>
<feature type="binding site" evidence="1">
    <location>
        <position position="193"/>
    </location>
    <ligand>
        <name>substrate</name>
    </ligand>
</feature>
<feature type="binding site" evidence="1">
    <location>
        <begin position="263"/>
        <end position="266"/>
    </location>
    <ligand>
        <name>substrate</name>
    </ligand>
</feature>
<feature type="binding site" evidence="1">
    <location>
        <position position="337"/>
    </location>
    <ligand>
        <name>substrate</name>
    </ligand>
</feature>
<feature type="binding site" evidence="1">
    <location>
        <position position="404"/>
    </location>
    <ligand>
        <name>Mn(2+)</name>
        <dbReference type="ChEBI" id="CHEBI:29035"/>
        <label>1</label>
    </ligand>
</feature>
<feature type="binding site" evidence="1">
    <location>
        <position position="408"/>
    </location>
    <ligand>
        <name>Mn(2+)</name>
        <dbReference type="ChEBI" id="CHEBI:29035"/>
        <label>1</label>
    </ligand>
</feature>
<feature type="binding site" evidence="1">
    <location>
        <position position="445"/>
    </location>
    <ligand>
        <name>Mn(2+)</name>
        <dbReference type="ChEBI" id="CHEBI:29035"/>
        <label>2</label>
    </ligand>
</feature>
<feature type="binding site" evidence="1">
    <location>
        <position position="446"/>
    </location>
    <ligand>
        <name>Mn(2+)</name>
        <dbReference type="ChEBI" id="CHEBI:29035"/>
        <label>2</label>
    </ligand>
</feature>
<feature type="binding site" evidence="1">
    <location>
        <position position="464"/>
    </location>
    <ligand>
        <name>Mn(2+)</name>
        <dbReference type="ChEBI" id="CHEBI:29035"/>
        <label>1</label>
    </ligand>
</feature>
<protein>
    <recommendedName>
        <fullName evidence="1">2,3-bisphosphoglycerate-independent phosphoglycerate mutase</fullName>
        <shortName evidence="1">BPG-independent PGAM</shortName>
        <shortName evidence="1">Phosphoglyceromutase</shortName>
        <shortName evidence="1">iPGM</shortName>
        <ecNumber evidence="1">5.4.2.12</ecNumber>
    </recommendedName>
</protein>
<evidence type="ECO:0000255" key="1">
    <source>
        <dbReference type="HAMAP-Rule" id="MF_01038"/>
    </source>
</evidence>
<comment type="function">
    <text evidence="1">Catalyzes the interconversion of 2-phosphoglycerate and 3-phosphoglycerate.</text>
</comment>
<comment type="catalytic activity">
    <reaction evidence="1">
        <text>(2R)-2-phosphoglycerate = (2R)-3-phosphoglycerate</text>
        <dbReference type="Rhea" id="RHEA:15901"/>
        <dbReference type="ChEBI" id="CHEBI:58272"/>
        <dbReference type="ChEBI" id="CHEBI:58289"/>
        <dbReference type="EC" id="5.4.2.12"/>
    </reaction>
</comment>
<comment type="cofactor">
    <cofactor evidence="1">
        <name>Mn(2+)</name>
        <dbReference type="ChEBI" id="CHEBI:29035"/>
    </cofactor>
    <text evidence="1">Binds 2 manganese ions per subunit.</text>
</comment>
<comment type="pathway">
    <text evidence="1">Carbohydrate degradation; glycolysis; pyruvate from D-glyceraldehyde 3-phosphate: step 3/5.</text>
</comment>
<comment type="subunit">
    <text evidence="1">Monomer.</text>
</comment>
<comment type="similarity">
    <text evidence="1">Belongs to the BPG-independent phosphoglycerate mutase family.</text>
</comment>
<name>GPMI_PSEAB</name>